<comment type="function">
    <text evidence="3 4 5">Cholesterol-binding protein which is involved in dietary cholesterol uptake from the environment (PubMed:22479487). Does not play a role in double-stranded RNA transport in contrast to other SID1 family members (PubMed:18201385, PubMed:29025917).</text>
</comment>
<comment type="catalytic activity">
    <reaction evidence="4">
        <text>cholesterol(in) = cholesterol(out)</text>
        <dbReference type="Rhea" id="RHEA:39747"/>
        <dbReference type="ChEBI" id="CHEBI:16113"/>
    </reaction>
    <physiologicalReaction direction="right-to-left" evidence="4">
        <dbReference type="Rhea" id="RHEA:39749"/>
    </physiologicalReaction>
</comment>
<comment type="subcellular location">
    <subcellularLocation>
        <location evidence="4">Cell membrane</location>
        <topology evidence="1">Multi-pass membrane protein</topology>
    </subcellularLocation>
</comment>
<comment type="tissue specificity">
    <text evidence="4">Highly expressed along the intestine with expression also detected in the pharynx, especially at the terminal bulb, and in the excretory gland cells.</text>
</comment>
<comment type="developmental stage">
    <text evidence="4">Expressed in the embryo, larva and adult with no difference in expression level across larval stages and adult.</text>
</comment>
<comment type="disruption phenotype">
    <text evidence="3 4">Hypersensitivity to cholesterol availability and decreased cholesterol uptake (PubMed:22479487). When grown in low cholesterol conditions, 72% reduction in offspring number compared to 25% reduction in wild-type worms, 60% reduction in oocyte number, altered oocyte distribution in 47% of mutants, and 5-fold increase in embryonic lethality (PubMed:22479487). In addition, in low cholesterol conditions, growth of mutants ceases by day 3, resulting in a 63% reduction in adult size at day 5, there is a 22% reduction in the number of L1 larvae that reach adulthood and a 4-5 hour delay in the L4-to-adult transition (PubMed:22479487). 78% reduction in dauer formation, increased sensitivity of adult hermaphrodites to heat exposure and reduced speed of movement independent of cholesterol availability (PubMed:22479487). Mutants show a twitching phenotype upon administration of unc-22 feeding RNAi, indicating a lack of involvement in the systemic RNAi response (PubMed:18201385). RNAi-mediated knockdown results in decreased cholesterol uptake and, when grown in low-cholesterol conditions, altered oocyte distribution in 42% of mutants, reduced oocyte numbers and reduced speed (PubMed:22479487).</text>
</comment>
<comment type="similarity">
    <text evidence="7">Belongs to the SID1 family.</text>
</comment>
<comment type="sequence caution" evidence="7">
    <conflict type="miscellaneous discrepancy">
        <sequence resource="EMBL-CDS" id="ABU75285"/>
    </conflict>
    <text>Probable cloning artifact.</text>
</comment>
<accession>Q9GYF0</accession>
<accession>A7YH04</accession>
<accession>A7YH06</accession>
<feature type="signal peptide" evidence="1">
    <location>
        <begin position="1"/>
        <end position="18"/>
    </location>
</feature>
<feature type="chain" id="PRO_5004326670" description="Cholesterol uptake protein 1" evidence="1">
    <location>
        <begin position="19"/>
        <end position="756"/>
    </location>
</feature>
<feature type="topological domain" description="Extracellular" evidence="7">
    <location>
        <begin position="19"/>
        <end position="268"/>
    </location>
</feature>
<feature type="transmembrane region" description="Helical" evidence="1">
    <location>
        <begin position="269"/>
        <end position="289"/>
    </location>
</feature>
<feature type="topological domain" description="Cytoplasmic" evidence="7">
    <location>
        <begin position="290"/>
        <end position="373"/>
    </location>
</feature>
<feature type="transmembrane region" description="Helical" evidence="1">
    <location>
        <begin position="374"/>
        <end position="394"/>
    </location>
</feature>
<feature type="topological domain" description="Extracellular" evidence="7">
    <location>
        <begin position="395"/>
        <end position="421"/>
    </location>
</feature>
<feature type="transmembrane region" description="Helical" evidence="1">
    <location>
        <begin position="422"/>
        <end position="442"/>
    </location>
</feature>
<feature type="topological domain" description="Cytoplasmic" evidence="7">
    <location>
        <begin position="443"/>
        <end position="473"/>
    </location>
</feature>
<feature type="transmembrane region" description="Helical" evidence="1">
    <location>
        <begin position="474"/>
        <end position="494"/>
    </location>
</feature>
<feature type="topological domain" description="Extracellular" evidence="7">
    <location>
        <begin position="495"/>
        <end position="498"/>
    </location>
</feature>
<feature type="transmembrane region" description="Helical" evidence="1">
    <location>
        <begin position="499"/>
        <end position="517"/>
    </location>
</feature>
<feature type="topological domain" description="Cytoplasmic" evidence="7">
    <location>
        <begin position="518"/>
        <end position="530"/>
    </location>
</feature>
<feature type="transmembrane region" description="Helical" evidence="1">
    <location>
        <begin position="531"/>
        <end position="551"/>
    </location>
</feature>
<feature type="topological domain" description="Extracellular" evidence="7">
    <location>
        <begin position="552"/>
        <end position="554"/>
    </location>
</feature>
<feature type="transmembrane region" description="Helical" evidence="1">
    <location>
        <begin position="555"/>
        <end position="575"/>
    </location>
</feature>
<feature type="topological domain" description="Cytoplasmic" evidence="7">
    <location>
        <begin position="576"/>
        <end position="612"/>
    </location>
</feature>
<feature type="transmembrane region" description="Helical" evidence="1">
    <location>
        <begin position="613"/>
        <end position="633"/>
    </location>
</feature>
<feature type="topological domain" description="Extracellular" evidence="7">
    <location>
        <begin position="634"/>
        <end position="637"/>
    </location>
</feature>
<feature type="transmembrane region" description="Helical" evidence="1">
    <location>
        <begin position="638"/>
        <end position="658"/>
    </location>
</feature>
<feature type="topological domain" description="Cytoplasmic" evidence="7">
    <location>
        <begin position="659"/>
        <end position="671"/>
    </location>
</feature>
<feature type="transmembrane region" description="Helical" evidence="1">
    <location>
        <begin position="672"/>
        <end position="692"/>
    </location>
</feature>
<feature type="topological domain" description="Extracellular" evidence="7">
    <location>
        <begin position="693"/>
        <end position="728"/>
    </location>
</feature>
<feature type="transmembrane region" description="Helical" evidence="1">
    <location>
        <begin position="729"/>
        <end position="749"/>
    </location>
</feature>
<feature type="topological domain" description="Cytoplasmic" evidence="7">
    <location>
        <begin position="750"/>
        <end position="756"/>
    </location>
</feature>
<feature type="short sequence motif" description="Cholesterol-binding sequence motif" evidence="4">
    <location>
        <begin position="124"/>
        <end position="129"/>
    </location>
</feature>
<feature type="short sequence motif" description="Cholesterol-binding sequence motif" evidence="4">
    <location>
        <begin position="570"/>
        <end position="578"/>
    </location>
</feature>
<feature type="glycosylation site" description="N-linked (GlcNAc...) asparagine" evidence="2">
    <location>
        <position position="39"/>
    </location>
</feature>
<feature type="glycosylation site" description="N-linked (GlcNAc...) asparagine" evidence="2">
    <location>
        <position position="63"/>
    </location>
</feature>
<feature type="glycosylation site" description="N-linked (GlcNAc...) asparagine" evidence="2">
    <location>
        <position position="140"/>
    </location>
</feature>
<feature type="glycosylation site" description="N-linked (GlcNAc...) asparagine" evidence="2">
    <location>
        <position position="174"/>
    </location>
</feature>
<feature type="glycosylation site" description="N-linked (GlcNAc...) asparagine" evidence="2">
    <location>
        <position position="257"/>
    </location>
</feature>
<feature type="mutagenesis site" description="Reduced interaction with cholesterol." evidence="4">
    <original>Y</original>
    <variation>G</variation>
    <location>
        <position position="576"/>
    </location>
</feature>
<feature type="sequence conflict" description="In Ref. 2; ABU75284." evidence="7" ref="2">
    <original>D</original>
    <variation>G</variation>
    <location>
        <position position="504"/>
    </location>
</feature>
<name>CHUP1_CAEEL</name>
<reference evidence="9" key="1">
    <citation type="journal article" date="1998" name="Science">
        <title>Genome sequence of the nematode C. elegans: a platform for investigating biology.</title>
        <authorList>
            <consortium name="The C. elegans sequencing consortium"/>
        </authorList>
    </citation>
    <scope>NUCLEOTIDE SEQUENCE [LARGE SCALE GENOMIC DNA]</scope>
    <source>
        <strain evidence="9">Bristol N2</strain>
    </source>
</reference>
<reference evidence="8" key="2">
    <citation type="journal article" date="2008" name="Genome Biol.">
        <title>Exploring systemic RNA interference in insects: a genome-wide survey for RNAi genes in Tribolium.</title>
        <authorList>
            <person name="Tomoyasu Y."/>
            <person name="Miller S.C."/>
            <person name="Tomita S."/>
            <person name="Schoppmeier M."/>
            <person name="Grossmann D."/>
            <person name="Bucher G."/>
        </authorList>
    </citation>
    <scope>NUCLEOTIDE SEQUENCE [MRNA] OF 304-504</scope>
    <scope>FUNCTION</scope>
    <scope>DISRUPTION PHENOTYPE</scope>
</reference>
<reference evidence="7" key="3">
    <citation type="journal article" date="2012" name="PLoS ONE">
        <title>CUP-1 is a novel protein involved in dietary cholesterol uptake in Caenorhabditis elegans.</title>
        <authorList>
            <person name="Valdes V.J."/>
            <person name="Athie A."/>
            <person name="Salinas L.S."/>
            <person name="Navarro R.E."/>
            <person name="Vaca L."/>
        </authorList>
    </citation>
    <scope>FUNCTION</scope>
    <scope>CATALYTIC ACTIVITY</scope>
    <scope>SUBCELLULAR LOCATION</scope>
    <scope>TISSUE SPECIFICITY</scope>
    <scope>DEVELOPMENTAL STAGE</scope>
    <scope>DISRUPTION PHENOTYPE</scope>
    <scope>MUTAGENESIS OF TYR-576</scope>
</reference>
<reference evidence="7" key="4">
    <citation type="journal article" date="2017" name="G3 (Bethesda)">
        <title>SID-1 Domains Important for dsRNA Import in Caenorhabditis elegans.</title>
        <authorList>
            <person name="Whangbo J.S."/>
            <person name="Weisman A.S."/>
            <person name="Chae J."/>
            <person name="Hunter C.P."/>
        </authorList>
    </citation>
    <scope>FUNCTION</scope>
</reference>
<proteinExistence type="evidence at protein level"/>
<organism evidence="9">
    <name type="scientific">Caenorhabditis elegans</name>
    <dbReference type="NCBI Taxonomy" id="6239"/>
    <lineage>
        <taxon>Eukaryota</taxon>
        <taxon>Metazoa</taxon>
        <taxon>Ecdysozoa</taxon>
        <taxon>Nematoda</taxon>
        <taxon>Chromadorea</taxon>
        <taxon>Rhabditida</taxon>
        <taxon>Rhabditina</taxon>
        <taxon>Rhabditomorpha</taxon>
        <taxon>Rhabditoidea</taxon>
        <taxon>Rhabditidae</taxon>
        <taxon>Peloderinae</taxon>
        <taxon>Caenorhabditis</taxon>
    </lineage>
</organism>
<protein>
    <recommendedName>
        <fullName evidence="6">Cholesterol uptake protein 1</fullName>
    </recommendedName>
</protein>
<evidence type="ECO:0000255" key="1"/>
<evidence type="ECO:0000255" key="2">
    <source>
        <dbReference type="PROSITE-ProRule" id="PRU00498"/>
    </source>
</evidence>
<evidence type="ECO:0000269" key="3">
    <source>
    </source>
</evidence>
<evidence type="ECO:0000269" key="4">
    <source>
    </source>
</evidence>
<evidence type="ECO:0000269" key="5">
    <source>
    </source>
</evidence>
<evidence type="ECO:0000303" key="6">
    <source>
    </source>
</evidence>
<evidence type="ECO:0000305" key="7"/>
<evidence type="ECO:0000312" key="8">
    <source>
        <dbReference type="EMBL" id="ABU75284.1"/>
    </source>
</evidence>
<evidence type="ECO:0000312" key="9">
    <source>
        <dbReference type="Proteomes" id="UP000001940"/>
    </source>
</evidence>
<evidence type="ECO:0000312" key="10">
    <source>
        <dbReference type="WormBase" id="ZK721.1"/>
    </source>
</evidence>
<dbReference type="EMBL" id="BX284606">
    <property type="protein sequence ID" value="CCD73100.1"/>
    <property type="molecule type" value="Genomic_DNA"/>
</dbReference>
<dbReference type="EMBL" id="EF695397">
    <property type="protein sequence ID" value="ABU75284.1"/>
    <property type="molecule type" value="mRNA"/>
</dbReference>
<dbReference type="EMBL" id="EF695398">
    <property type="protein sequence ID" value="ABU75285.1"/>
    <property type="status" value="ALT_SEQ"/>
    <property type="molecule type" value="mRNA"/>
</dbReference>
<dbReference type="PIR" id="T28870">
    <property type="entry name" value="T28870"/>
</dbReference>
<dbReference type="RefSeq" id="NP_509489.1">
    <property type="nucleotide sequence ID" value="NM_077088.8"/>
</dbReference>
<dbReference type="SMR" id="Q9GYF0"/>
<dbReference type="FunCoup" id="Q9GYF0">
    <property type="interactions" value="1579"/>
</dbReference>
<dbReference type="STRING" id="6239.ZK721.1a.1"/>
<dbReference type="TCDB" id="1.A.79.1.5">
    <property type="family name" value="the cholesterol uptake protein (chup) or double stranded rna uptake family"/>
</dbReference>
<dbReference type="GlyCosmos" id="Q9GYF0">
    <property type="glycosylation" value="5 sites, No reported glycans"/>
</dbReference>
<dbReference type="PaxDb" id="6239-ZK721.1a"/>
<dbReference type="EnsemblMetazoa" id="ZK721.1.1">
    <property type="protein sequence ID" value="ZK721.1.1"/>
    <property type="gene ID" value="WBGene00006477"/>
</dbReference>
<dbReference type="GeneID" id="181125"/>
<dbReference type="KEGG" id="cel:CELE_ZK721.1"/>
<dbReference type="AGR" id="WB:WBGene00006477"/>
<dbReference type="CTD" id="181125"/>
<dbReference type="WormBase" id="ZK721.1">
    <property type="protein sequence ID" value="CE26397"/>
    <property type="gene ID" value="WBGene00006477"/>
    <property type="gene designation" value="chup-1"/>
</dbReference>
<dbReference type="eggNOG" id="ENOG502QUXZ">
    <property type="taxonomic scope" value="Eukaryota"/>
</dbReference>
<dbReference type="GeneTree" id="ENSGT00390000010091"/>
<dbReference type="HOGENOM" id="CLU_357018_0_0_1"/>
<dbReference type="InParanoid" id="Q9GYF0"/>
<dbReference type="OMA" id="GLHQTMT"/>
<dbReference type="OrthoDB" id="416618at2759"/>
<dbReference type="PhylomeDB" id="Q9GYF0"/>
<dbReference type="PRO" id="PR:Q9GYF0"/>
<dbReference type="Proteomes" id="UP000001940">
    <property type="component" value="Chromosome X"/>
</dbReference>
<dbReference type="Bgee" id="WBGene00006477">
    <property type="expression patterns" value="Expressed in embryo and 3 other cell types or tissues"/>
</dbReference>
<dbReference type="GO" id="GO:0031410">
    <property type="term" value="C:cytoplasmic vesicle"/>
    <property type="evidence" value="ECO:0000314"/>
    <property type="project" value="WormBase"/>
</dbReference>
<dbReference type="GO" id="GO:0005768">
    <property type="term" value="C:endosome"/>
    <property type="evidence" value="ECO:0000314"/>
    <property type="project" value="WormBase"/>
</dbReference>
<dbReference type="GO" id="GO:0005794">
    <property type="term" value="C:Golgi apparatus"/>
    <property type="evidence" value="ECO:0000314"/>
    <property type="project" value="WormBase"/>
</dbReference>
<dbReference type="GO" id="GO:0005764">
    <property type="term" value="C:lysosome"/>
    <property type="evidence" value="ECO:0000314"/>
    <property type="project" value="WormBase"/>
</dbReference>
<dbReference type="GO" id="GO:0005886">
    <property type="term" value="C:plasma membrane"/>
    <property type="evidence" value="ECO:0000314"/>
    <property type="project" value="WormBase"/>
</dbReference>
<dbReference type="GO" id="GO:0015485">
    <property type="term" value="F:cholesterol binding"/>
    <property type="evidence" value="ECO:0000314"/>
    <property type="project" value="WormBase"/>
</dbReference>
<dbReference type="GO" id="GO:0003725">
    <property type="term" value="F:double-stranded RNA binding"/>
    <property type="evidence" value="ECO:0000318"/>
    <property type="project" value="GO_Central"/>
</dbReference>
<dbReference type="GO" id="GO:0051033">
    <property type="term" value="F:RNA transmembrane transporter activity"/>
    <property type="evidence" value="ECO:0000318"/>
    <property type="project" value="GO_Central"/>
</dbReference>
<dbReference type="GO" id="GO:0070508">
    <property type="term" value="P:cholesterol import"/>
    <property type="evidence" value="ECO:0000315"/>
    <property type="project" value="WormBase"/>
</dbReference>
<dbReference type="GO" id="GO:0050658">
    <property type="term" value="P:RNA transport"/>
    <property type="evidence" value="ECO:0000318"/>
    <property type="project" value="GO_Central"/>
</dbReference>
<dbReference type="InterPro" id="IPR025958">
    <property type="entry name" value="SID1_TM_fam"/>
</dbReference>
<dbReference type="PANTHER" id="PTHR12185:SF14">
    <property type="entry name" value="CHOLESTEROL UPTAKE PROTEIN 1"/>
    <property type="match status" value="1"/>
</dbReference>
<dbReference type="PANTHER" id="PTHR12185">
    <property type="entry name" value="SID1 TRANSMEMBRANE FAMILY MEMEBER"/>
    <property type="match status" value="1"/>
</dbReference>
<dbReference type="Pfam" id="PF13965">
    <property type="entry name" value="SID-1_RNA_chan"/>
    <property type="match status" value="1"/>
</dbReference>
<gene>
    <name evidence="10" type="primary">chup-1</name>
    <name evidence="6" type="synonym">cup-1</name>
    <name evidence="10" type="synonym">tag-130</name>
    <name evidence="10" type="ORF">ZK721.1</name>
</gene>
<keyword id="KW-1003">Cell membrane</keyword>
<keyword id="KW-0325">Glycoprotein</keyword>
<keyword id="KW-0446">Lipid-binding</keyword>
<keyword id="KW-0472">Membrane</keyword>
<keyword id="KW-1185">Reference proteome</keyword>
<keyword id="KW-0732">Signal</keyword>
<keyword id="KW-0754">Steroid-binding</keyword>
<keyword id="KW-0812">Transmembrane</keyword>
<keyword id="KW-1133">Transmembrane helix</keyword>
<sequence>MRTSQAIFILIFLDSVRNQSPQVIPAKWDVVYEKETGHNMSLTVFRFQVKEQYSVARIIMSCNESTEHNPLLAVFREKLAILSLQVPLIVDNYEYSQVARTLCPFTEYKEGEAFTVEVTSSRPVHYNFRAELVQNFYLYNNSQRLVTASASEPVYLRYDIPGDVDSVAVHLDSNSTICMTVSVQKIGCPVFDLPDNVNSMGLHQTMTTSATIPVEKSRMSSFYVVFVVNTNDDLCSEILSIKPNKPTKFPLRMKSFNVTIESSMKIFDYTIPIVFWACILLLVTIVVFVYHYFDGIWERRFVSRAYTHLEDNAQEQRIRDFYDFQRMSEDDDLKDYDLLTDCQDMMVVRAKASLTVADLSMTPYEERELKYDVYKIALAIIGIFYNITVLQLIISKAGSLRQSGDLDECTFNFQCARPLWYFVAFNNVVSNGGYVYFGTLIIVMNYCRERSFRRLFAVQPTLAERYGLPQHSGLMTAIGLAVIMEGISSATYHVCPNNINYQFDTALMYVIGMLGKLKIWSLRHPDMVVSAYHAFGFLGVFLMAAIAGVYVHNMIFWALFSIIYIASMLLVSLEFYFKGIWTLNLRELRNSIRLSWVSSRHLSCVVPAYKARFFVILLLNIANTAVVVYGLEAHPKDFLSFLLIPFIGNLFIYIIYYILMKMIYREKIPKRAIALLFAAVISWTCAGILFNQRVSDWSKMPAISRELNKPCIFLNFYDNHDLWHLSSAFAIFFSFTAINVIDDDLMFVMRNTIRVF</sequence>